<sequence length="256" mass="26842">MLRIADKTFDSHLFTGTGKFASSQLMVEAIRASGSQLVTLAMKRVDLRQHNDAILDPLIAAGVTLLPNTSGAKTAEEAIFAAHLAREALGTNWLKLEIHPDARWLLPDPIETLKAAETLVQQGFVVLPYCGADPVLCKRLEEVGCAAVMPLGAPIGSNQGLETRAMLEIIIQQATVPVVVDAGIGVPSHAAQALEMGADAVLVNTAIAVADDPVNMAKAFRLAVDAGLLARQSGPGSRSHFAHATSPLTGFLEASA</sequence>
<accession>B7LUL2</accession>
<name>THIG_ESCF3</name>
<evidence type="ECO:0000255" key="1">
    <source>
        <dbReference type="HAMAP-Rule" id="MF_00443"/>
    </source>
</evidence>
<proteinExistence type="inferred from homology"/>
<dbReference type="EC" id="2.8.1.10" evidence="1"/>
<dbReference type="EMBL" id="CU928158">
    <property type="protein sequence ID" value="CAQ91215.1"/>
    <property type="molecule type" value="Genomic_DNA"/>
</dbReference>
<dbReference type="RefSeq" id="WP_000944087.1">
    <property type="nucleotide sequence ID" value="NC_011740.1"/>
</dbReference>
<dbReference type="SMR" id="B7LUL2"/>
<dbReference type="GeneID" id="75059368"/>
<dbReference type="KEGG" id="efe:EFER_3764"/>
<dbReference type="HOGENOM" id="CLU_062233_1_0_6"/>
<dbReference type="OrthoDB" id="9805935at2"/>
<dbReference type="UniPathway" id="UPA00060"/>
<dbReference type="Proteomes" id="UP000000745">
    <property type="component" value="Chromosome"/>
</dbReference>
<dbReference type="GO" id="GO:0005737">
    <property type="term" value="C:cytoplasm"/>
    <property type="evidence" value="ECO:0007669"/>
    <property type="project" value="UniProtKB-SubCell"/>
</dbReference>
<dbReference type="GO" id="GO:1990107">
    <property type="term" value="F:thiazole synthase activity"/>
    <property type="evidence" value="ECO:0007669"/>
    <property type="project" value="UniProtKB-EC"/>
</dbReference>
<dbReference type="GO" id="GO:0009229">
    <property type="term" value="P:thiamine diphosphate biosynthetic process"/>
    <property type="evidence" value="ECO:0007669"/>
    <property type="project" value="UniProtKB-UniRule"/>
</dbReference>
<dbReference type="CDD" id="cd04728">
    <property type="entry name" value="ThiG"/>
    <property type="match status" value="1"/>
</dbReference>
<dbReference type="FunFam" id="3.20.20.70:FF:000049">
    <property type="entry name" value="Thiazole synthase"/>
    <property type="match status" value="1"/>
</dbReference>
<dbReference type="Gene3D" id="3.20.20.70">
    <property type="entry name" value="Aldolase class I"/>
    <property type="match status" value="1"/>
</dbReference>
<dbReference type="HAMAP" id="MF_00443">
    <property type="entry name" value="ThiG"/>
    <property type="match status" value="1"/>
</dbReference>
<dbReference type="InterPro" id="IPR013785">
    <property type="entry name" value="Aldolase_TIM"/>
</dbReference>
<dbReference type="InterPro" id="IPR033983">
    <property type="entry name" value="Thiazole_synthase_ThiG"/>
</dbReference>
<dbReference type="InterPro" id="IPR008867">
    <property type="entry name" value="ThiG"/>
</dbReference>
<dbReference type="PANTHER" id="PTHR34266">
    <property type="entry name" value="THIAZOLE SYNTHASE"/>
    <property type="match status" value="1"/>
</dbReference>
<dbReference type="PANTHER" id="PTHR34266:SF2">
    <property type="entry name" value="THIAZOLE SYNTHASE"/>
    <property type="match status" value="1"/>
</dbReference>
<dbReference type="Pfam" id="PF05690">
    <property type="entry name" value="ThiG"/>
    <property type="match status" value="1"/>
</dbReference>
<dbReference type="SUPFAM" id="SSF110399">
    <property type="entry name" value="ThiG-like"/>
    <property type="match status" value="1"/>
</dbReference>
<feature type="chain" id="PRO_1000196863" description="Thiazole synthase">
    <location>
        <begin position="1"/>
        <end position="256"/>
    </location>
</feature>
<feature type="active site" description="Schiff-base intermediate with DXP" evidence="1">
    <location>
        <position position="95"/>
    </location>
</feature>
<feature type="binding site" evidence="1">
    <location>
        <position position="156"/>
    </location>
    <ligand>
        <name>1-deoxy-D-xylulose 5-phosphate</name>
        <dbReference type="ChEBI" id="CHEBI:57792"/>
    </ligand>
</feature>
<feature type="binding site" evidence="1">
    <location>
        <begin position="182"/>
        <end position="183"/>
    </location>
    <ligand>
        <name>1-deoxy-D-xylulose 5-phosphate</name>
        <dbReference type="ChEBI" id="CHEBI:57792"/>
    </ligand>
</feature>
<feature type="binding site" evidence="1">
    <location>
        <begin position="204"/>
        <end position="205"/>
    </location>
    <ligand>
        <name>1-deoxy-D-xylulose 5-phosphate</name>
        <dbReference type="ChEBI" id="CHEBI:57792"/>
    </ligand>
</feature>
<keyword id="KW-0963">Cytoplasm</keyword>
<keyword id="KW-0704">Schiff base</keyword>
<keyword id="KW-0784">Thiamine biosynthesis</keyword>
<keyword id="KW-0808">Transferase</keyword>
<comment type="function">
    <text evidence="1">Catalyzes the rearrangement of 1-deoxy-D-xylulose 5-phosphate (DXP) to produce the thiazole phosphate moiety of thiamine. Sulfur is provided by the thiocarboxylate moiety of the carrier protein ThiS. In vitro, sulfur can be provided by H(2)S.</text>
</comment>
<comment type="catalytic activity">
    <reaction evidence="1">
        <text>[ThiS sulfur-carrier protein]-C-terminal-Gly-aminoethanethioate + 2-iminoacetate + 1-deoxy-D-xylulose 5-phosphate = [ThiS sulfur-carrier protein]-C-terminal Gly-Gly + 2-[(2R,5Z)-2-carboxy-4-methylthiazol-5(2H)-ylidene]ethyl phosphate + 2 H2O + H(+)</text>
        <dbReference type="Rhea" id="RHEA:26297"/>
        <dbReference type="Rhea" id="RHEA-COMP:12909"/>
        <dbReference type="Rhea" id="RHEA-COMP:19908"/>
        <dbReference type="ChEBI" id="CHEBI:15377"/>
        <dbReference type="ChEBI" id="CHEBI:15378"/>
        <dbReference type="ChEBI" id="CHEBI:57792"/>
        <dbReference type="ChEBI" id="CHEBI:62899"/>
        <dbReference type="ChEBI" id="CHEBI:77846"/>
        <dbReference type="ChEBI" id="CHEBI:90778"/>
        <dbReference type="ChEBI" id="CHEBI:232372"/>
        <dbReference type="EC" id="2.8.1.10"/>
    </reaction>
</comment>
<comment type="pathway">
    <text evidence="1">Cofactor biosynthesis; thiamine diphosphate biosynthesis.</text>
</comment>
<comment type="subunit">
    <text evidence="1">Homotetramer. Forms heterodimers with either ThiH or ThiS.</text>
</comment>
<comment type="subcellular location">
    <subcellularLocation>
        <location evidence="1">Cytoplasm</location>
    </subcellularLocation>
</comment>
<comment type="similarity">
    <text evidence="1">Belongs to the ThiG family.</text>
</comment>
<reference key="1">
    <citation type="journal article" date="2009" name="PLoS Genet.">
        <title>Organised genome dynamics in the Escherichia coli species results in highly diverse adaptive paths.</title>
        <authorList>
            <person name="Touchon M."/>
            <person name="Hoede C."/>
            <person name="Tenaillon O."/>
            <person name="Barbe V."/>
            <person name="Baeriswyl S."/>
            <person name="Bidet P."/>
            <person name="Bingen E."/>
            <person name="Bonacorsi S."/>
            <person name="Bouchier C."/>
            <person name="Bouvet O."/>
            <person name="Calteau A."/>
            <person name="Chiapello H."/>
            <person name="Clermont O."/>
            <person name="Cruveiller S."/>
            <person name="Danchin A."/>
            <person name="Diard M."/>
            <person name="Dossat C."/>
            <person name="Karoui M.E."/>
            <person name="Frapy E."/>
            <person name="Garry L."/>
            <person name="Ghigo J.M."/>
            <person name="Gilles A.M."/>
            <person name="Johnson J."/>
            <person name="Le Bouguenec C."/>
            <person name="Lescat M."/>
            <person name="Mangenot S."/>
            <person name="Martinez-Jehanne V."/>
            <person name="Matic I."/>
            <person name="Nassif X."/>
            <person name="Oztas S."/>
            <person name="Petit M.A."/>
            <person name="Pichon C."/>
            <person name="Rouy Z."/>
            <person name="Ruf C.S."/>
            <person name="Schneider D."/>
            <person name="Tourret J."/>
            <person name="Vacherie B."/>
            <person name="Vallenet D."/>
            <person name="Medigue C."/>
            <person name="Rocha E.P.C."/>
            <person name="Denamur E."/>
        </authorList>
    </citation>
    <scope>NUCLEOTIDE SEQUENCE [LARGE SCALE GENOMIC DNA]</scope>
    <source>
        <strain>ATCC 35469 / DSM 13698 / BCRC 15582 / CCUG 18766 / IAM 14443 / JCM 21226 / LMG 7866 / NBRC 102419 / NCTC 12128 / CDC 0568-73</strain>
    </source>
</reference>
<gene>
    <name evidence="1" type="primary">thiG</name>
    <name type="ordered locus">EFER_3764</name>
</gene>
<protein>
    <recommendedName>
        <fullName evidence="1">Thiazole synthase</fullName>
        <ecNumber evidence="1">2.8.1.10</ecNumber>
    </recommendedName>
</protein>
<organism>
    <name type="scientific">Escherichia fergusonii (strain ATCC 35469 / DSM 13698 / CCUG 18766 / IAM 14443 / JCM 21226 / LMG 7866 / NBRC 102419 / NCTC 12128 / CDC 0568-73)</name>
    <dbReference type="NCBI Taxonomy" id="585054"/>
    <lineage>
        <taxon>Bacteria</taxon>
        <taxon>Pseudomonadati</taxon>
        <taxon>Pseudomonadota</taxon>
        <taxon>Gammaproteobacteria</taxon>
        <taxon>Enterobacterales</taxon>
        <taxon>Enterobacteriaceae</taxon>
        <taxon>Escherichia</taxon>
    </lineage>
</organism>